<reference key="1">
    <citation type="journal article" date="2008" name="Environ. Microbiol.">
        <title>The genome of Erwinia tasmaniensis strain Et1/99, a non-pathogenic bacterium in the genus Erwinia.</title>
        <authorList>
            <person name="Kube M."/>
            <person name="Migdoll A.M."/>
            <person name="Mueller I."/>
            <person name="Kuhl H."/>
            <person name="Beck A."/>
            <person name="Reinhardt R."/>
            <person name="Geider K."/>
        </authorList>
    </citation>
    <scope>NUCLEOTIDE SEQUENCE [LARGE SCALE GENOMIC DNA]</scope>
    <source>
        <strain>DSM 17950 / CFBP 7177 / CIP 109463 / NCPPB 4357 / Et1/99</strain>
    </source>
</reference>
<sequence>MHNEAPITRRKSKRIYVGKVPVGDGAPIAVQSMTNTRTTDVAATVAQIKALERVGVDIVRVSVPTMDAAEAFRLIKQQVNVPLVADIHFDYRIALKVAEYGVDCLRINPGNIGNEERIRTVVDCARHYNIPIRIGVNGGSLEKDLQEKYGEPTPQALLESAMRHVDHLDRLNFDMFKVSVKASDVFLAVESYRLLAKQIDQPLHLGITEAGGARAGAVKSAIGLGLLLSEGIGDTLRISLAADPVEEVKVGFDILKSLRIRARGINFIACPTCSRQEFDVIGTVNALEERLEDIITPMDISIIGCVVNGPGEATVSTMGVTGGSKKSGFYEDGVRLRERLDNDNMIDQLEARIRAKATILDAARRIDIQQVEK</sequence>
<accession>B2VE89</accession>
<name>ISPG_ERWT9</name>
<comment type="function">
    <text evidence="1">Converts 2C-methyl-D-erythritol 2,4-cyclodiphosphate (ME-2,4cPP) into 1-hydroxy-2-methyl-2-(E)-butenyl 4-diphosphate.</text>
</comment>
<comment type="catalytic activity">
    <reaction evidence="1">
        <text>(2E)-4-hydroxy-3-methylbut-2-enyl diphosphate + oxidized [flavodoxin] + H2O + 2 H(+) = 2-C-methyl-D-erythritol 2,4-cyclic diphosphate + reduced [flavodoxin]</text>
        <dbReference type="Rhea" id="RHEA:43604"/>
        <dbReference type="Rhea" id="RHEA-COMP:10622"/>
        <dbReference type="Rhea" id="RHEA-COMP:10623"/>
        <dbReference type="ChEBI" id="CHEBI:15377"/>
        <dbReference type="ChEBI" id="CHEBI:15378"/>
        <dbReference type="ChEBI" id="CHEBI:57618"/>
        <dbReference type="ChEBI" id="CHEBI:58210"/>
        <dbReference type="ChEBI" id="CHEBI:58483"/>
        <dbReference type="ChEBI" id="CHEBI:128753"/>
        <dbReference type="EC" id="1.17.7.3"/>
    </reaction>
</comment>
<comment type="cofactor">
    <cofactor evidence="1">
        <name>[4Fe-4S] cluster</name>
        <dbReference type="ChEBI" id="CHEBI:49883"/>
    </cofactor>
    <text evidence="1">Binds 1 [4Fe-4S] cluster.</text>
</comment>
<comment type="pathway">
    <text evidence="1">Isoprenoid biosynthesis; isopentenyl diphosphate biosynthesis via DXP pathway; isopentenyl diphosphate from 1-deoxy-D-xylulose 5-phosphate: step 5/6.</text>
</comment>
<comment type="similarity">
    <text evidence="1">Belongs to the IspG family.</text>
</comment>
<organism>
    <name type="scientific">Erwinia tasmaniensis (strain DSM 17950 / CFBP 7177 / CIP 109463 / NCPPB 4357 / Et1/99)</name>
    <dbReference type="NCBI Taxonomy" id="465817"/>
    <lineage>
        <taxon>Bacteria</taxon>
        <taxon>Pseudomonadati</taxon>
        <taxon>Pseudomonadota</taxon>
        <taxon>Gammaproteobacteria</taxon>
        <taxon>Enterobacterales</taxon>
        <taxon>Erwiniaceae</taxon>
        <taxon>Erwinia</taxon>
    </lineage>
</organism>
<dbReference type="EC" id="1.17.7.3" evidence="1"/>
<dbReference type="EMBL" id="CU468135">
    <property type="protein sequence ID" value="CAO96074.1"/>
    <property type="molecule type" value="Genomic_DNA"/>
</dbReference>
<dbReference type="RefSeq" id="WP_012440774.1">
    <property type="nucleotide sequence ID" value="NC_010694.1"/>
</dbReference>
<dbReference type="SMR" id="B2VE89"/>
<dbReference type="STRING" id="465817.ETA_10280"/>
<dbReference type="KEGG" id="eta:ETA_10280"/>
<dbReference type="eggNOG" id="COG0821">
    <property type="taxonomic scope" value="Bacteria"/>
</dbReference>
<dbReference type="HOGENOM" id="CLU_042258_0_0_6"/>
<dbReference type="OrthoDB" id="9803214at2"/>
<dbReference type="UniPathway" id="UPA00056">
    <property type="reaction ID" value="UER00096"/>
</dbReference>
<dbReference type="Proteomes" id="UP000001726">
    <property type="component" value="Chromosome"/>
</dbReference>
<dbReference type="GO" id="GO:0051539">
    <property type="term" value="F:4 iron, 4 sulfur cluster binding"/>
    <property type="evidence" value="ECO:0007669"/>
    <property type="project" value="UniProtKB-UniRule"/>
</dbReference>
<dbReference type="GO" id="GO:0046429">
    <property type="term" value="F:4-hydroxy-3-methylbut-2-en-1-yl diphosphate synthase activity (ferredoxin)"/>
    <property type="evidence" value="ECO:0007669"/>
    <property type="project" value="UniProtKB-UniRule"/>
</dbReference>
<dbReference type="GO" id="GO:0141197">
    <property type="term" value="F:4-hydroxy-3-methylbut-2-enyl-diphosphate synthase activity (flavodoxin)"/>
    <property type="evidence" value="ECO:0007669"/>
    <property type="project" value="UniProtKB-EC"/>
</dbReference>
<dbReference type="GO" id="GO:0005506">
    <property type="term" value="F:iron ion binding"/>
    <property type="evidence" value="ECO:0007669"/>
    <property type="project" value="InterPro"/>
</dbReference>
<dbReference type="GO" id="GO:0019288">
    <property type="term" value="P:isopentenyl diphosphate biosynthetic process, methylerythritol 4-phosphate pathway"/>
    <property type="evidence" value="ECO:0007669"/>
    <property type="project" value="UniProtKB-UniRule"/>
</dbReference>
<dbReference type="GO" id="GO:0016114">
    <property type="term" value="P:terpenoid biosynthetic process"/>
    <property type="evidence" value="ECO:0007669"/>
    <property type="project" value="InterPro"/>
</dbReference>
<dbReference type="FunFam" id="3.20.20.20:FF:000001">
    <property type="entry name" value="4-hydroxy-3-methylbut-2-en-1-yl diphosphate synthase (flavodoxin)"/>
    <property type="match status" value="1"/>
</dbReference>
<dbReference type="FunFam" id="3.30.413.10:FF:000002">
    <property type="entry name" value="4-hydroxy-3-methylbut-2-en-1-yl diphosphate synthase (flavodoxin)"/>
    <property type="match status" value="1"/>
</dbReference>
<dbReference type="Gene3D" id="3.20.20.20">
    <property type="entry name" value="Dihydropteroate synthase-like"/>
    <property type="match status" value="1"/>
</dbReference>
<dbReference type="Gene3D" id="3.30.413.10">
    <property type="entry name" value="Sulfite Reductase Hemoprotein, domain 1"/>
    <property type="match status" value="1"/>
</dbReference>
<dbReference type="HAMAP" id="MF_00159">
    <property type="entry name" value="IspG"/>
    <property type="match status" value="1"/>
</dbReference>
<dbReference type="InterPro" id="IPR011005">
    <property type="entry name" value="Dihydropteroate_synth-like_sf"/>
</dbReference>
<dbReference type="InterPro" id="IPR036849">
    <property type="entry name" value="Enolase-like_C_sf"/>
</dbReference>
<dbReference type="InterPro" id="IPR016425">
    <property type="entry name" value="IspG_bac"/>
</dbReference>
<dbReference type="InterPro" id="IPR004588">
    <property type="entry name" value="IspG_bac-typ"/>
</dbReference>
<dbReference type="InterPro" id="IPR045854">
    <property type="entry name" value="NO2/SO3_Rdtase_4Fe4S_sf"/>
</dbReference>
<dbReference type="NCBIfam" id="TIGR00612">
    <property type="entry name" value="ispG_gcpE"/>
    <property type="match status" value="1"/>
</dbReference>
<dbReference type="NCBIfam" id="NF001540">
    <property type="entry name" value="PRK00366.1"/>
    <property type="match status" value="1"/>
</dbReference>
<dbReference type="PANTHER" id="PTHR30454">
    <property type="entry name" value="4-HYDROXY-3-METHYLBUT-2-EN-1-YL DIPHOSPHATE SYNTHASE"/>
    <property type="match status" value="1"/>
</dbReference>
<dbReference type="PANTHER" id="PTHR30454:SF0">
    <property type="entry name" value="4-HYDROXY-3-METHYLBUT-2-EN-1-YL DIPHOSPHATE SYNTHASE (FERREDOXIN), CHLOROPLASTIC"/>
    <property type="match status" value="1"/>
</dbReference>
<dbReference type="Pfam" id="PF04551">
    <property type="entry name" value="GcpE"/>
    <property type="match status" value="1"/>
</dbReference>
<dbReference type="PIRSF" id="PIRSF004640">
    <property type="entry name" value="IspG"/>
    <property type="match status" value="1"/>
</dbReference>
<dbReference type="SUPFAM" id="SSF51604">
    <property type="entry name" value="Enolase C-terminal domain-like"/>
    <property type="match status" value="1"/>
</dbReference>
<dbReference type="SUPFAM" id="SSF56014">
    <property type="entry name" value="Nitrite and sulphite reductase 4Fe-4S domain-like"/>
    <property type="match status" value="1"/>
</dbReference>
<proteinExistence type="inferred from homology"/>
<gene>
    <name evidence="1" type="primary">ispG</name>
    <name type="ordered locus">ETA_10280</name>
</gene>
<keyword id="KW-0004">4Fe-4S</keyword>
<keyword id="KW-0408">Iron</keyword>
<keyword id="KW-0411">Iron-sulfur</keyword>
<keyword id="KW-0414">Isoprene biosynthesis</keyword>
<keyword id="KW-0479">Metal-binding</keyword>
<keyword id="KW-0560">Oxidoreductase</keyword>
<keyword id="KW-1185">Reference proteome</keyword>
<feature type="chain" id="PRO_1000097160" description="4-hydroxy-3-methylbut-2-en-1-yl diphosphate synthase (flavodoxin)">
    <location>
        <begin position="1"/>
        <end position="373"/>
    </location>
</feature>
<feature type="binding site" evidence="1">
    <location>
        <position position="270"/>
    </location>
    <ligand>
        <name>[4Fe-4S] cluster</name>
        <dbReference type="ChEBI" id="CHEBI:49883"/>
    </ligand>
</feature>
<feature type="binding site" evidence="1">
    <location>
        <position position="273"/>
    </location>
    <ligand>
        <name>[4Fe-4S] cluster</name>
        <dbReference type="ChEBI" id="CHEBI:49883"/>
    </ligand>
</feature>
<feature type="binding site" evidence="1">
    <location>
        <position position="305"/>
    </location>
    <ligand>
        <name>[4Fe-4S] cluster</name>
        <dbReference type="ChEBI" id="CHEBI:49883"/>
    </ligand>
</feature>
<feature type="binding site" evidence="1">
    <location>
        <position position="312"/>
    </location>
    <ligand>
        <name>[4Fe-4S] cluster</name>
        <dbReference type="ChEBI" id="CHEBI:49883"/>
    </ligand>
</feature>
<evidence type="ECO:0000255" key="1">
    <source>
        <dbReference type="HAMAP-Rule" id="MF_00159"/>
    </source>
</evidence>
<protein>
    <recommendedName>
        <fullName evidence="1">4-hydroxy-3-methylbut-2-en-1-yl diphosphate synthase (flavodoxin)</fullName>
        <ecNumber evidence="1">1.17.7.3</ecNumber>
    </recommendedName>
    <alternativeName>
        <fullName evidence="1">1-hydroxy-2-methyl-2-(E)-butenyl 4-diphosphate synthase</fullName>
    </alternativeName>
</protein>